<proteinExistence type="inferred from homology"/>
<sequence length="323" mass="35358">MSNNNSKLEFVPNIQLKEDLGAFSYKVQLSPVEKGMAHILGNSIRRVLLSSLSGASIIKVNIANVLHEYSTLEDVKEDVVEIVSNLKKVAIKLDTGIDRLDLELSVNKSGVVSAGDFKTTQGVEIINKDQPIATLTNQRAFSLTATVSVGRNVGILSAIPTELERVGDIAVDADFNPIKRVAFEVFDNGDSETLEVFVKTNGTIEPLAAVTKALEYFCEQISVFVSLRVPSNGKTGDVLIDSNIDPILLKPIDDLELTVRSSNCLRAENIKYLGDLVQYSESQLMKIPNLGKKSLNEIKQILIDNNLSLGVQIDNFRELVEGK</sequence>
<organism>
    <name type="scientific">Francisella tularensis subsp. holarctica (strain FTNF002-00 / FTA)</name>
    <dbReference type="NCBI Taxonomy" id="458234"/>
    <lineage>
        <taxon>Bacteria</taxon>
        <taxon>Pseudomonadati</taxon>
        <taxon>Pseudomonadota</taxon>
        <taxon>Gammaproteobacteria</taxon>
        <taxon>Thiotrichales</taxon>
        <taxon>Francisellaceae</taxon>
        <taxon>Francisella</taxon>
    </lineage>
</organism>
<accession>A7N9U9</accession>
<keyword id="KW-0240">DNA-directed RNA polymerase</keyword>
<keyword id="KW-0548">Nucleotidyltransferase</keyword>
<keyword id="KW-0804">Transcription</keyword>
<keyword id="KW-0808">Transferase</keyword>
<gene>
    <name evidence="1" type="primary">rpoA1</name>
    <name type="ordered locus">FTA_0275</name>
</gene>
<name>RPOA1_FRATF</name>
<comment type="function">
    <text evidence="1">DNA-dependent RNA polymerase catalyzes the transcription of DNA into RNA using the four ribonucleoside triphosphates as substrates.</text>
</comment>
<comment type="catalytic activity">
    <reaction evidence="1">
        <text>RNA(n) + a ribonucleoside 5'-triphosphate = RNA(n+1) + diphosphate</text>
        <dbReference type="Rhea" id="RHEA:21248"/>
        <dbReference type="Rhea" id="RHEA-COMP:14527"/>
        <dbReference type="Rhea" id="RHEA-COMP:17342"/>
        <dbReference type="ChEBI" id="CHEBI:33019"/>
        <dbReference type="ChEBI" id="CHEBI:61557"/>
        <dbReference type="ChEBI" id="CHEBI:140395"/>
        <dbReference type="EC" id="2.7.7.6"/>
    </reaction>
</comment>
<comment type="subunit">
    <text evidence="1">Homodimer. The RNAP catalytic core consists of 2 alpha, 1 beta, 1 beta' and 1 omega subunit. When a sigma factor is associated with the core the holoenzyme is formed, which can initiate transcription.</text>
</comment>
<comment type="domain">
    <text evidence="1">The N-terminal domain is essential for RNAP assembly and basal transcription, whereas the C-terminal domain is involved in interaction with transcriptional regulators and with upstream promoter elements.</text>
</comment>
<comment type="similarity">
    <text evidence="1">Belongs to the RNA polymerase alpha chain family.</text>
</comment>
<reference key="1">
    <citation type="journal article" date="2009" name="PLoS ONE">
        <title>Complete genome sequence of Francisella tularensis subspecies holarctica FTNF002-00.</title>
        <authorList>
            <person name="Barabote R.D."/>
            <person name="Xie G."/>
            <person name="Brettin T.S."/>
            <person name="Hinrichs S.H."/>
            <person name="Fey P.D."/>
            <person name="Jay J.J."/>
            <person name="Engle J.L."/>
            <person name="Godbole S.D."/>
            <person name="Noronha J.M."/>
            <person name="Scheuermann R.H."/>
            <person name="Zhou L.W."/>
            <person name="Lion C."/>
            <person name="Dempsey M.P."/>
        </authorList>
    </citation>
    <scope>NUCLEOTIDE SEQUENCE [LARGE SCALE GENOMIC DNA]</scope>
    <source>
        <strain>FTNF002-00 / FTA</strain>
    </source>
</reference>
<dbReference type="EC" id="2.7.7.6" evidence="1"/>
<dbReference type="EMBL" id="CP000803">
    <property type="protein sequence ID" value="ABU60752.1"/>
    <property type="molecule type" value="Genomic_DNA"/>
</dbReference>
<dbReference type="RefSeq" id="WP_003021582.1">
    <property type="nucleotide sequence ID" value="NC_009749.1"/>
</dbReference>
<dbReference type="SMR" id="A7N9U9"/>
<dbReference type="KEGG" id="fta:FTA_0275"/>
<dbReference type="HOGENOM" id="CLU_053084_0_0_6"/>
<dbReference type="GO" id="GO:0005737">
    <property type="term" value="C:cytoplasm"/>
    <property type="evidence" value="ECO:0007669"/>
    <property type="project" value="UniProtKB-ARBA"/>
</dbReference>
<dbReference type="GO" id="GO:0000428">
    <property type="term" value="C:DNA-directed RNA polymerase complex"/>
    <property type="evidence" value="ECO:0007669"/>
    <property type="project" value="UniProtKB-KW"/>
</dbReference>
<dbReference type="GO" id="GO:0003677">
    <property type="term" value="F:DNA binding"/>
    <property type="evidence" value="ECO:0007669"/>
    <property type="project" value="UniProtKB-UniRule"/>
</dbReference>
<dbReference type="GO" id="GO:0003899">
    <property type="term" value="F:DNA-directed RNA polymerase activity"/>
    <property type="evidence" value="ECO:0007669"/>
    <property type="project" value="UniProtKB-UniRule"/>
</dbReference>
<dbReference type="GO" id="GO:0046983">
    <property type="term" value="F:protein dimerization activity"/>
    <property type="evidence" value="ECO:0007669"/>
    <property type="project" value="InterPro"/>
</dbReference>
<dbReference type="GO" id="GO:0006351">
    <property type="term" value="P:DNA-templated transcription"/>
    <property type="evidence" value="ECO:0007669"/>
    <property type="project" value="UniProtKB-UniRule"/>
</dbReference>
<dbReference type="CDD" id="cd06928">
    <property type="entry name" value="RNAP_alpha_NTD"/>
    <property type="match status" value="1"/>
</dbReference>
<dbReference type="FunFam" id="1.10.150.20:FF:000001">
    <property type="entry name" value="DNA-directed RNA polymerase subunit alpha"/>
    <property type="match status" value="1"/>
</dbReference>
<dbReference type="Gene3D" id="1.10.150.20">
    <property type="entry name" value="5' to 3' exonuclease, C-terminal subdomain"/>
    <property type="match status" value="1"/>
</dbReference>
<dbReference type="Gene3D" id="2.170.120.12">
    <property type="entry name" value="DNA-directed RNA polymerase, insert domain"/>
    <property type="match status" value="1"/>
</dbReference>
<dbReference type="Gene3D" id="3.30.1360.10">
    <property type="entry name" value="RNA polymerase, RBP11-like subunit"/>
    <property type="match status" value="1"/>
</dbReference>
<dbReference type="HAMAP" id="MF_00059">
    <property type="entry name" value="RNApol_bact_RpoA"/>
    <property type="match status" value="1"/>
</dbReference>
<dbReference type="InterPro" id="IPR011262">
    <property type="entry name" value="DNA-dir_RNA_pol_insert"/>
</dbReference>
<dbReference type="InterPro" id="IPR011263">
    <property type="entry name" value="DNA-dir_RNA_pol_RpoA/D/Rpb3"/>
</dbReference>
<dbReference type="InterPro" id="IPR011773">
    <property type="entry name" value="DNA-dir_RpoA"/>
</dbReference>
<dbReference type="InterPro" id="IPR036603">
    <property type="entry name" value="RBP11-like"/>
</dbReference>
<dbReference type="InterPro" id="IPR011260">
    <property type="entry name" value="RNAP_asu_C"/>
</dbReference>
<dbReference type="InterPro" id="IPR036643">
    <property type="entry name" value="RNApol_insert_sf"/>
</dbReference>
<dbReference type="NCBIfam" id="NF003513">
    <property type="entry name" value="PRK05182.1-2"/>
    <property type="match status" value="1"/>
</dbReference>
<dbReference type="NCBIfam" id="TIGR02027">
    <property type="entry name" value="rpoA"/>
    <property type="match status" value="1"/>
</dbReference>
<dbReference type="Pfam" id="PF01000">
    <property type="entry name" value="RNA_pol_A_bac"/>
    <property type="match status" value="1"/>
</dbReference>
<dbReference type="Pfam" id="PF03118">
    <property type="entry name" value="RNA_pol_A_CTD"/>
    <property type="match status" value="1"/>
</dbReference>
<dbReference type="Pfam" id="PF01193">
    <property type="entry name" value="RNA_pol_L"/>
    <property type="match status" value="1"/>
</dbReference>
<dbReference type="SMART" id="SM00662">
    <property type="entry name" value="RPOLD"/>
    <property type="match status" value="1"/>
</dbReference>
<dbReference type="SUPFAM" id="SSF47789">
    <property type="entry name" value="C-terminal domain of RNA polymerase alpha subunit"/>
    <property type="match status" value="1"/>
</dbReference>
<dbReference type="SUPFAM" id="SSF56553">
    <property type="entry name" value="Insert subdomain of RNA polymerase alpha subunit"/>
    <property type="match status" value="1"/>
</dbReference>
<dbReference type="SUPFAM" id="SSF55257">
    <property type="entry name" value="RBP11-like subunits of RNA polymerase"/>
    <property type="match status" value="1"/>
</dbReference>
<feature type="chain" id="PRO_0000323634" description="DNA-directed RNA polymerase subunit alpha 1">
    <location>
        <begin position="1"/>
        <end position="323"/>
    </location>
</feature>
<feature type="region of interest" description="Alpha N-terminal domain (alpha-NTD)" evidence="1">
    <location>
        <begin position="1"/>
        <end position="228"/>
    </location>
</feature>
<feature type="region of interest" description="Alpha C-terminal domain (alpha-CTD)" evidence="1">
    <location>
        <begin position="244"/>
        <end position="323"/>
    </location>
</feature>
<protein>
    <recommendedName>
        <fullName evidence="1">DNA-directed RNA polymerase subunit alpha 1</fullName>
        <shortName evidence="1">RNAP subunit alpha 1</shortName>
        <ecNumber evidence="1">2.7.7.6</ecNumber>
    </recommendedName>
    <alternativeName>
        <fullName evidence="1">RNA polymerase subunit alpha 1</fullName>
    </alternativeName>
    <alternativeName>
        <fullName evidence="1">Transcriptase subunit alpha 1</fullName>
    </alternativeName>
</protein>
<evidence type="ECO:0000255" key="1">
    <source>
        <dbReference type="HAMAP-Rule" id="MF_00059"/>
    </source>
</evidence>